<dbReference type="EMBL" id="GU721048">
    <property type="protein sequence ID" value="ADE28865.1"/>
    <property type="molecule type" value="mRNA"/>
</dbReference>
<dbReference type="GO" id="GO:0005576">
    <property type="term" value="C:extracellular region"/>
    <property type="evidence" value="ECO:0007669"/>
    <property type="project" value="UniProtKB-SubCell"/>
</dbReference>
<dbReference type="GO" id="GO:0090729">
    <property type="term" value="F:toxin activity"/>
    <property type="evidence" value="ECO:0007669"/>
    <property type="project" value="UniProtKB-KW"/>
</dbReference>
<evidence type="ECO:0000250" key="1"/>
<evidence type="ECO:0000255" key="2"/>
<name>TU97_GEMSP</name>
<feature type="signal peptide" evidence="2">
    <location>
        <begin position="1"/>
        <end position="21"/>
    </location>
</feature>
<feature type="propeptide" id="PRO_0000415070" evidence="1">
    <location>
        <begin position="22"/>
        <end position="39"/>
    </location>
</feature>
<feature type="peptide" id="PRO_0000415071" description="Turripeptide IX-07">
    <location>
        <begin position="41"/>
        <end position="82"/>
    </location>
</feature>
<feature type="disulfide bond" evidence="1">
    <location>
        <begin position="48"/>
        <end position="70"/>
    </location>
</feature>
<feature type="disulfide bond" evidence="1">
    <location>
        <begin position="55"/>
        <end position="74"/>
    </location>
</feature>
<feature type="disulfide bond" evidence="1">
    <location>
        <begin position="60"/>
        <end position="81"/>
    </location>
</feature>
<comment type="subcellular location">
    <subcellularLocation>
        <location evidence="1">Secreted</location>
    </subcellularLocation>
</comment>
<comment type="tissue specificity">
    <text>Expressed by the venom duct.</text>
</comment>
<comment type="domain">
    <text>The cysteine framework is IX (C-C-C-C-C-C).</text>
</comment>
<sequence length="82" mass="9114">MGFYMLLTVALLLTSLMNVEATPVNQAERSALEKSGLGNRIQPRYDNCGDAEADCYQSKCMDEETYDEECEASCNYVVANCI</sequence>
<keyword id="KW-1015">Disulfide bond</keyword>
<keyword id="KW-0528">Neurotoxin</keyword>
<keyword id="KW-0964">Secreted</keyword>
<keyword id="KW-0732">Signal</keyword>
<keyword id="KW-0800">Toxin</keyword>
<protein>
    <recommendedName>
        <fullName>Turripeptide IX-07</fullName>
    </recommendedName>
</protein>
<proteinExistence type="evidence at transcript level"/>
<organism>
    <name type="scientific">Gemmula speciosa</name>
    <name type="common">Splendid gem-turris</name>
    <name type="synonym">Pleurotoma speciosa</name>
    <dbReference type="NCBI Taxonomy" id="439592"/>
    <lineage>
        <taxon>Eukaryota</taxon>
        <taxon>Metazoa</taxon>
        <taxon>Spiralia</taxon>
        <taxon>Lophotrochozoa</taxon>
        <taxon>Mollusca</taxon>
        <taxon>Gastropoda</taxon>
        <taxon>Caenogastropoda</taxon>
        <taxon>Neogastropoda</taxon>
        <taxon>Conoidea</taxon>
        <taxon>Turridae</taxon>
        <taxon>Gemmula</taxon>
    </lineage>
</organism>
<accession>D5KXG7</accession>
<reference key="1">
    <citation type="submission" date="2010-02" db="EMBL/GenBank/DDBJ databases">
        <title>Cysteine-rich toxin gene families from Gemmula speciosa (Reeve, 1843).</title>
        <authorList>
            <person name="Uichanco J.A.V."/>
            <person name="Planta J.R.G."/>
            <person name="Santos A.D."/>
            <person name="Concepcion G.P."/>
        </authorList>
    </citation>
    <scope>NUCLEOTIDE SEQUENCE [MRNA]</scope>
    <source>
        <tissue>Venom duct</tissue>
    </source>
</reference>